<comment type="function">
    <text evidence="1">Part of a membrane-bound complex that couples electron transfer with translocation of ions across the membrane. Required to maintain the reduced state of SoxR.</text>
</comment>
<comment type="cofactor">
    <cofactor evidence="1">
        <name>[4Fe-4S] cluster</name>
        <dbReference type="ChEBI" id="CHEBI:49883"/>
    </cofactor>
    <text evidence="1">Binds 3 [4Fe-4S] clusters.</text>
</comment>
<comment type="subunit">
    <text evidence="1">The complex is composed of six subunits: RsxA, RsxB, RsxC, RsxD, RsxE and RsxG.</text>
</comment>
<comment type="subcellular location">
    <subcellularLocation>
        <location evidence="1">Cell inner membrane</location>
    </subcellularLocation>
</comment>
<comment type="similarity">
    <text evidence="1">Belongs to the 4Fe4S bacterial-type ferredoxin family. RnfB subfamily.</text>
</comment>
<evidence type="ECO:0000255" key="1">
    <source>
        <dbReference type="HAMAP-Rule" id="MF_00463"/>
    </source>
</evidence>
<dbReference type="EC" id="7.-.-.-" evidence="1"/>
<dbReference type="EMBL" id="CP000034">
    <property type="protein sequence ID" value="ABB61960.1"/>
    <property type="molecule type" value="Genomic_DNA"/>
</dbReference>
<dbReference type="RefSeq" id="WP_000991798.1">
    <property type="nucleotide sequence ID" value="NC_007606.1"/>
</dbReference>
<dbReference type="RefSeq" id="YP_403451.1">
    <property type="nucleotide sequence ID" value="NC_007606.1"/>
</dbReference>
<dbReference type="STRING" id="300267.SDY_1851"/>
<dbReference type="EnsemblBacteria" id="ABB61960">
    <property type="protein sequence ID" value="ABB61960"/>
    <property type="gene ID" value="SDY_1851"/>
</dbReference>
<dbReference type="KEGG" id="sdy:SDY_1851"/>
<dbReference type="PATRIC" id="fig|300267.13.peg.2230"/>
<dbReference type="HOGENOM" id="CLU_063448_2_0_6"/>
<dbReference type="Proteomes" id="UP000002716">
    <property type="component" value="Chromosome"/>
</dbReference>
<dbReference type="GO" id="GO:0005886">
    <property type="term" value="C:plasma membrane"/>
    <property type="evidence" value="ECO:0007669"/>
    <property type="project" value="UniProtKB-SubCell"/>
</dbReference>
<dbReference type="GO" id="GO:0051539">
    <property type="term" value="F:4 iron, 4 sulfur cluster binding"/>
    <property type="evidence" value="ECO:0007669"/>
    <property type="project" value="UniProtKB-UniRule"/>
</dbReference>
<dbReference type="GO" id="GO:0009055">
    <property type="term" value="F:electron transfer activity"/>
    <property type="evidence" value="ECO:0007669"/>
    <property type="project" value="InterPro"/>
</dbReference>
<dbReference type="GO" id="GO:0046872">
    <property type="term" value="F:metal ion binding"/>
    <property type="evidence" value="ECO:0007669"/>
    <property type="project" value="UniProtKB-KW"/>
</dbReference>
<dbReference type="GO" id="GO:0022900">
    <property type="term" value="P:electron transport chain"/>
    <property type="evidence" value="ECO:0007669"/>
    <property type="project" value="UniProtKB-UniRule"/>
</dbReference>
<dbReference type="FunFam" id="1.10.15.40:FF:000001">
    <property type="entry name" value="Ion-translocating oxidoreductase complex subunit B"/>
    <property type="match status" value="1"/>
</dbReference>
<dbReference type="Gene3D" id="3.30.70.20">
    <property type="match status" value="1"/>
</dbReference>
<dbReference type="Gene3D" id="1.10.15.40">
    <property type="entry name" value="Electron transport complex subunit B, putative Fe-S cluster"/>
    <property type="match status" value="1"/>
</dbReference>
<dbReference type="HAMAP" id="MF_00463">
    <property type="entry name" value="RsxB_RnfB"/>
    <property type="match status" value="1"/>
</dbReference>
<dbReference type="InterPro" id="IPR007202">
    <property type="entry name" value="4Fe-4S_dom"/>
</dbReference>
<dbReference type="InterPro" id="IPR017896">
    <property type="entry name" value="4Fe4S_Fe-S-bd"/>
</dbReference>
<dbReference type="InterPro" id="IPR017900">
    <property type="entry name" value="4Fe4S_Fe_S_CS"/>
</dbReference>
<dbReference type="InterPro" id="IPR050395">
    <property type="entry name" value="4Fe4S_Ferredoxin_RnfB"/>
</dbReference>
<dbReference type="InterPro" id="IPR010207">
    <property type="entry name" value="Elect_transpt_cplx_RnfB/RsxB"/>
</dbReference>
<dbReference type="InterPro" id="IPR016463">
    <property type="entry name" value="RnfB/RsxB_Proteobac"/>
</dbReference>
<dbReference type="NCBIfam" id="NF003475">
    <property type="entry name" value="PRK05113.1"/>
    <property type="match status" value="1"/>
</dbReference>
<dbReference type="NCBIfam" id="TIGR01944">
    <property type="entry name" value="rnfB"/>
    <property type="match status" value="1"/>
</dbReference>
<dbReference type="PANTHER" id="PTHR43560">
    <property type="entry name" value="ION-TRANSLOCATING OXIDOREDUCTASE COMPLEX SUBUNIT B"/>
    <property type="match status" value="1"/>
</dbReference>
<dbReference type="PANTHER" id="PTHR43560:SF1">
    <property type="entry name" value="ION-TRANSLOCATING OXIDOREDUCTASE COMPLEX SUBUNIT B"/>
    <property type="match status" value="1"/>
</dbReference>
<dbReference type="Pfam" id="PF14697">
    <property type="entry name" value="Fer4_21"/>
    <property type="match status" value="1"/>
</dbReference>
<dbReference type="Pfam" id="PF04060">
    <property type="entry name" value="FeS"/>
    <property type="match status" value="1"/>
</dbReference>
<dbReference type="PIRSF" id="PIRSF005784">
    <property type="entry name" value="Elect_transpt_RnfB"/>
    <property type="match status" value="1"/>
</dbReference>
<dbReference type="SUPFAM" id="SSF54862">
    <property type="entry name" value="4Fe-4S ferredoxins"/>
    <property type="match status" value="1"/>
</dbReference>
<dbReference type="PROSITE" id="PS51656">
    <property type="entry name" value="4FE4S"/>
    <property type="match status" value="1"/>
</dbReference>
<dbReference type="PROSITE" id="PS00198">
    <property type="entry name" value="4FE4S_FER_1"/>
    <property type="match status" value="2"/>
</dbReference>
<dbReference type="PROSITE" id="PS51379">
    <property type="entry name" value="4FE4S_FER_2"/>
    <property type="match status" value="2"/>
</dbReference>
<name>RSXB_SHIDS</name>
<sequence length="192" mass="20518">MNAIWIAVAAVSLLGLAFGAILGYASRRFAVEDDPVVEKIDEILPQSQCGQCGYPGCRPYAEAISCNGEKINRCAPGGEAVMLKIAELLNVEAQPLDGEAQELTPARMVAVIDENNCIGCTKCIQACPVDAIVGATRAMHTVMSDLCTGCNLCVDPCPTHCISLQPVAETPDSWKWDLNTIPVRIIPVEHHA</sequence>
<proteinExistence type="inferred from homology"/>
<feature type="chain" id="PRO_1000013659" description="Ion-translocating oxidoreductase complex subunit B">
    <location>
        <begin position="1"/>
        <end position="192"/>
    </location>
</feature>
<feature type="domain" description="4Fe-4S" evidence="1">
    <location>
        <begin position="32"/>
        <end position="91"/>
    </location>
</feature>
<feature type="domain" description="4Fe-4S ferredoxin-type 1" evidence="1">
    <location>
        <begin position="108"/>
        <end position="137"/>
    </location>
</feature>
<feature type="domain" description="4Fe-4S ferredoxin-type 2" evidence="1">
    <location>
        <begin position="138"/>
        <end position="167"/>
    </location>
</feature>
<feature type="region of interest" description="Hydrophobic" evidence="1">
    <location>
        <begin position="1"/>
        <end position="26"/>
    </location>
</feature>
<feature type="binding site" evidence="1">
    <location>
        <position position="49"/>
    </location>
    <ligand>
        <name>[4Fe-4S] cluster</name>
        <dbReference type="ChEBI" id="CHEBI:49883"/>
        <label>1</label>
    </ligand>
</feature>
<feature type="binding site" evidence="1">
    <location>
        <position position="52"/>
    </location>
    <ligand>
        <name>[4Fe-4S] cluster</name>
        <dbReference type="ChEBI" id="CHEBI:49883"/>
        <label>1</label>
    </ligand>
</feature>
<feature type="binding site" evidence="1">
    <location>
        <position position="57"/>
    </location>
    <ligand>
        <name>[4Fe-4S] cluster</name>
        <dbReference type="ChEBI" id="CHEBI:49883"/>
        <label>1</label>
    </ligand>
</feature>
<feature type="binding site" evidence="1">
    <location>
        <position position="74"/>
    </location>
    <ligand>
        <name>[4Fe-4S] cluster</name>
        <dbReference type="ChEBI" id="CHEBI:49883"/>
        <label>1</label>
    </ligand>
</feature>
<feature type="binding site" evidence="1">
    <location>
        <position position="117"/>
    </location>
    <ligand>
        <name>[4Fe-4S] cluster</name>
        <dbReference type="ChEBI" id="CHEBI:49883"/>
        <label>2</label>
    </ligand>
</feature>
<feature type="binding site" evidence="1">
    <location>
        <position position="120"/>
    </location>
    <ligand>
        <name>[4Fe-4S] cluster</name>
        <dbReference type="ChEBI" id="CHEBI:49883"/>
        <label>2</label>
    </ligand>
</feature>
<feature type="binding site" evidence="1">
    <location>
        <position position="123"/>
    </location>
    <ligand>
        <name>[4Fe-4S] cluster</name>
        <dbReference type="ChEBI" id="CHEBI:49883"/>
        <label>2</label>
    </ligand>
</feature>
<feature type="binding site" evidence="1">
    <location>
        <position position="127"/>
    </location>
    <ligand>
        <name>[4Fe-4S] cluster</name>
        <dbReference type="ChEBI" id="CHEBI:49883"/>
        <label>3</label>
    </ligand>
</feature>
<feature type="binding site" evidence="1">
    <location>
        <position position="147"/>
    </location>
    <ligand>
        <name>[4Fe-4S] cluster</name>
        <dbReference type="ChEBI" id="CHEBI:49883"/>
        <label>3</label>
    </ligand>
</feature>
<feature type="binding site" evidence="1">
    <location>
        <position position="150"/>
    </location>
    <ligand>
        <name>[4Fe-4S] cluster</name>
        <dbReference type="ChEBI" id="CHEBI:49883"/>
        <label>3</label>
    </ligand>
</feature>
<feature type="binding site" evidence="1">
    <location>
        <position position="153"/>
    </location>
    <ligand>
        <name>[4Fe-4S] cluster</name>
        <dbReference type="ChEBI" id="CHEBI:49883"/>
        <label>3</label>
    </ligand>
</feature>
<feature type="binding site" evidence="1">
    <location>
        <position position="157"/>
    </location>
    <ligand>
        <name>[4Fe-4S] cluster</name>
        <dbReference type="ChEBI" id="CHEBI:49883"/>
        <label>2</label>
    </ligand>
</feature>
<accession>Q32FE5</accession>
<keyword id="KW-0004">4Fe-4S</keyword>
<keyword id="KW-0997">Cell inner membrane</keyword>
<keyword id="KW-1003">Cell membrane</keyword>
<keyword id="KW-0249">Electron transport</keyword>
<keyword id="KW-0408">Iron</keyword>
<keyword id="KW-0411">Iron-sulfur</keyword>
<keyword id="KW-0472">Membrane</keyword>
<keyword id="KW-0479">Metal-binding</keyword>
<keyword id="KW-1185">Reference proteome</keyword>
<keyword id="KW-0677">Repeat</keyword>
<keyword id="KW-1278">Translocase</keyword>
<keyword id="KW-0813">Transport</keyword>
<gene>
    <name evidence="1" type="primary">rsxB</name>
    <name type="ordered locus">SDY_1851</name>
</gene>
<organism>
    <name type="scientific">Shigella dysenteriae serotype 1 (strain Sd197)</name>
    <dbReference type="NCBI Taxonomy" id="300267"/>
    <lineage>
        <taxon>Bacteria</taxon>
        <taxon>Pseudomonadati</taxon>
        <taxon>Pseudomonadota</taxon>
        <taxon>Gammaproteobacteria</taxon>
        <taxon>Enterobacterales</taxon>
        <taxon>Enterobacteriaceae</taxon>
        <taxon>Shigella</taxon>
    </lineage>
</organism>
<protein>
    <recommendedName>
        <fullName evidence="1">Ion-translocating oxidoreductase complex subunit B</fullName>
        <ecNumber evidence="1">7.-.-.-</ecNumber>
    </recommendedName>
    <alternativeName>
        <fullName evidence="1">Rsx electron transport complex subunit B</fullName>
    </alternativeName>
</protein>
<reference key="1">
    <citation type="journal article" date="2005" name="Nucleic Acids Res.">
        <title>Genome dynamics and diversity of Shigella species, the etiologic agents of bacillary dysentery.</title>
        <authorList>
            <person name="Yang F."/>
            <person name="Yang J."/>
            <person name="Zhang X."/>
            <person name="Chen L."/>
            <person name="Jiang Y."/>
            <person name="Yan Y."/>
            <person name="Tang X."/>
            <person name="Wang J."/>
            <person name="Xiong Z."/>
            <person name="Dong J."/>
            <person name="Xue Y."/>
            <person name="Zhu Y."/>
            <person name="Xu X."/>
            <person name="Sun L."/>
            <person name="Chen S."/>
            <person name="Nie H."/>
            <person name="Peng J."/>
            <person name="Xu J."/>
            <person name="Wang Y."/>
            <person name="Yuan Z."/>
            <person name="Wen Y."/>
            <person name="Yao Z."/>
            <person name="Shen Y."/>
            <person name="Qiang B."/>
            <person name="Hou Y."/>
            <person name="Yu J."/>
            <person name="Jin Q."/>
        </authorList>
    </citation>
    <scope>NUCLEOTIDE SEQUENCE [LARGE SCALE GENOMIC DNA]</scope>
    <source>
        <strain>Sd197</strain>
    </source>
</reference>